<keyword id="KW-0903">Direct protein sequencing</keyword>
<keyword id="KW-1015">Disulfide bond</keyword>
<keyword id="KW-0256">Endoplasmic reticulum</keyword>
<keyword id="KW-0325">Glycoprotein</keyword>
<keyword id="KW-0333">Golgi apparatus</keyword>
<keyword id="KW-1267">Proteomics identification</keyword>
<keyword id="KW-1185">Reference proteome</keyword>
<keyword id="KW-0964">Secreted</keyword>
<keyword id="KW-0732">Signal</keyword>
<keyword id="KW-0770">Synapse</keyword>
<comment type="function">
    <text evidence="1">May be involved in synaptic functions in the CNS.</text>
</comment>
<comment type="subunit">
    <text evidence="2 3">Heterohexamer; disulfide-linked heterotrimers. Interacts with CBLN1. May also form oligomers with CBLN2 and CBLN4 (By similarity).</text>
</comment>
<comment type="subcellular location">
    <subcellularLocation>
        <location evidence="1">Endoplasmic reticulum</location>
    </subcellularLocation>
    <subcellularLocation>
        <location evidence="1">Golgi apparatus</location>
        <location evidence="1">cis-Golgi network</location>
    </subcellularLocation>
    <subcellularLocation>
        <location evidence="1">Secreted</location>
    </subcellularLocation>
    <subcellularLocation>
        <location evidence="1">Synapse</location>
    </subcellularLocation>
    <text evidence="1">In the absence of CBLN1, remains in the endoplasmic reticulum/cis-Golgi apparatus. Partial secretion depends on an association with CBLN1 and maybe CBLN4, but not on CBLN2 (By similarity).</text>
</comment>
<protein>
    <recommendedName>
        <fullName>Cerebellin-3</fullName>
    </recommendedName>
</protein>
<reference key="1">
    <citation type="journal article" date="2003" name="Genome Res.">
        <title>The secreted protein discovery initiative (SPDI), a large-scale effort to identify novel human secreted and transmembrane proteins: a bioinformatics assessment.</title>
        <authorList>
            <person name="Clark H.F."/>
            <person name="Gurney A.L."/>
            <person name="Abaya E."/>
            <person name="Baker K."/>
            <person name="Baldwin D.T."/>
            <person name="Brush J."/>
            <person name="Chen J."/>
            <person name="Chow B."/>
            <person name="Chui C."/>
            <person name="Crowley C."/>
            <person name="Currell B."/>
            <person name="Deuel B."/>
            <person name="Dowd P."/>
            <person name="Eaton D."/>
            <person name="Foster J.S."/>
            <person name="Grimaldi C."/>
            <person name="Gu Q."/>
            <person name="Hass P.E."/>
            <person name="Heldens S."/>
            <person name="Huang A."/>
            <person name="Kim H.S."/>
            <person name="Klimowski L."/>
            <person name="Jin Y."/>
            <person name="Johnson S."/>
            <person name="Lee J."/>
            <person name="Lewis L."/>
            <person name="Liao D."/>
            <person name="Mark M.R."/>
            <person name="Robbie E."/>
            <person name="Sanchez C."/>
            <person name="Schoenfeld J."/>
            <person name="Seshagiri S."/>
            <person name="Simmons L."/>
            <person name="Singh J."/>
            <person name="Smith V."/>
            <person name="Stinson J."/>
            <person name="Vagts A."/>
            <person name="Vandlen R.L."/>
            <person name="Watanabe C."/>
            <person name="Wieand D."/>
            <person name="Woods K."/>
            <person name="Xie M.-H."/>
            <person name="Yansura D.G."/>
            <person name="Yi S."/>
            <person name="Yu G."/>
            <person name="Yuan J."/>
            <person name="Zhang M."/>
            <person name="Zhang Z."/>
            <person name="Goddard A.D."/>
            <person name="Wood W.I."/>
            <person name="Godowski P.J."/>
            <person name="Gray A.M."/>
        </authorList>
    </citation>
    <scope>NUCLEOTIDE SEQUENCE [LARGE SCALE MRNA]</scope>
</reference>
<reference key="2">
    <citation type="journal article" date="2004" name="Protein Sci.">
        <title>Signal peptide prediction based on analysis of experimentally verified cleavage sites.</title>
        <authorList>
            <person name="Zhang Z."/>
            <person name="Henzel W.J."/>
        </authorList>
    </citation>
    <scope>PROTEIN SEQUENCE OF 33-47</scope>
</reference>
<name>CBLN3_HUMAN</name>
<feature type="signal peptide" evidence="6">
    <location>
        <begin position="1"/>
        <end position="32"/>
    </location>
</feature>
<feature type="chain" id="PRO_0000003554" description="Cerebellin-3">
    <location>
        <begin position="33"/>
        <end position="205"/>
    </location>
</feature>
<feature type="domain" description="C1q" evidence="5">
    <location>
        <begin position="67"/>
        <end position="205"/>
    </location>
</feature>
<feature type="region of interest" description="Necessary for interaction with CBLN3, and homotrimerization" evidence="1">
    <location>
        <begin position="72"/>
        <end position="205"/>
    </location>
</feature>
<feature type="glycosylation site" description="N-linked (GlcNAc...) asparagine" evidence="4">
    <location>
        <position position="90"/>
    </location>
</feature>
<feature type="disulfide bond" description="Interchain" evidence="3">
    <location>
        <position position="45"/>
    </location>
</feature>
<feature type="disulfide bond" description="Interchain" evidence="3">
    <location>
        <position position="49"/>
    </location>
</feature>
<sequence length="205" mass="21521">MLGAKPHWLPGPLHSPGLPLVLVLLALGAGWAQEGSEPVLLEGECLVVCEPGRAAAGGPGGAALGEAPPGRVAFAAVRSHHHEPAGETGNGTSGAIYFDQVLVNEGGGFDRASGSFVAPVRGVYSFRFHVVKVYNRQTVQVSLMLNTWPVISAFANDPDVTREAATSSVLLPLDPGDRVSLRLRRGNLLGGWKYSSFSGFLIFPL</sequence>
<organism>
    <name type="scientific">Homo sapiens</name>
    <name type="common">Human</name>
    <dbReference type="NCBI Taxonomy" id="9606"/>
    <lineage>
        <taxon>Eukaryota</taxon>
        <taxon>Metazoa</taxon>
        <taxon>Chordata</taxon>
        <taxon>Craniata</taxon>
        <taxon>Vertebrata</taxon>
        <taxon>Euteleostomi</taxon>
        <taxon>Mammalia</taxon>
        <taxon>Eutheria</taxon>
        <taxon>Euarchontoglires</taxon>
        <taxon>Primates</taxon>
        <taxon>Haplorrhini</taxon>
        <taxon>Catarrhini</taxon>
        <taxon>Hominidae</taxon>
        <taxon>Homo</taxon>
    </lineage>
</organism>
<proteinExistence type="evidence at protein level"/>
<accession>Q6UW01</accession>
<evidence type="ECO:0000250" key="1"/>
<evidence type="ECO:0000250" key="2">
    <source>
        <dbReference type="UniProtKB" id="Q9JHG0"/>
    </source>
</evidence>
<evidence type="ECO:0000250" key="3">
    <source>
        <dbReference type="UniProtKB" id="Q9R171"/>
    </source>
</evidence>
<evidence type="ECO:0000255" key="4"/>
<evidence type="ECO:0000255" key="5">
    <source>
        <dbReference type="PROSITE-ProRule" id="PRU00368"/>
    </source>
</evidence>
<evidence type="ECO:0000269" key="6">
    <source>
    </source>
</evidence>
<gene>
    <name type="primary">CBLN3</name>
    <name type="ORF">UNQ755/PRO1486</name>
</gene>
<dbReference type="EMBL" id="AY359070">
    <property type="protein sequence ID" value="AAQ89429.1"/>
    <property type="molecule type" value="mRNA"/>
</dbReference>
<dbReference type="CCDS" id="CCDS32057.1"/>
<dbReference type="RefSeq" id="NP_001034860.1">
    <property type="nucleotide sequence ID" value="NM_001039771.3"/>
</dbReference>
<dbReference type="SMR" id="Q6UW01"/>
<dbReference type="FunCoup" id="Q6UW01">
    <property type="interactions" value="24"/>
</dbReference>
<dbReference type="STRING" id="9606.ENSP00000267406"/>
<dbReference type="GlyCosmos" id="Q6UW01">
    <property type="glycosylation" value="1 site, No reported glycans"/>
</dbReference>
<dbReference type="GlyGen" id="Q6UW01">
    <property type="glycosylation" value="1 site"/>
</dbReference>
<dbReference type="iPTMnet" id="Q6UW01"/>
<dbReference type="PhosphoSitePlus" id="Q6UW01"/>
<dbReference type="BioMuta" id="CBLN3"/>
<dbReference type="DMDM" id="52782722"/>
<dbReference type="MassIVE" id="Q6UW01"/>
<dbReference type="PaxDb" id="9606-ENSP00000267406"/>
<dbReference type="PeptideAtlas" id="Q6UW01"/>
<dbReference type="ProteomicsDB" id="67440"/>
<dbReference type="Antibodypedia" id="50437">
    <property type="antibodies" value="73 antibodies from 18 providers"/>
</dbReference>
<dbReference type="DNASU" id="643866"/>
<dbReference type="Ensembl" id="ENST00000267406.11">
    <property type="protein sequence ID" value="ENSP00000267406.6"/>
    <property type="gene ID" value="ENSG00000139899.11"/>
</dbReference>
<dbReference type="GeneID" id="643866"/>
<dbReference type="KEGG" id="hsa:643866"/>
<dbReference type="MANE-Select" id="ENST00000267406.11">
    <property type="protein sequence ID" value="ENSP00000267406.6"/>
    <property type="RefSeq nucleotide sequence ID" value="NM_001039771.3"/>
    <property type="RefSeq protein sequence ID" value="NP_001034860.1"/>
</dbReference>
<dbReference type="UCSC" id="uc001wpg.5">
    <property type="organism name" value="human"/>
</dbReference>
<dbReference type="AGR" id="HGNC:20146"/>
<dbReference type="CTD" id="643866"/>
<dbReference type="DisGeNET" id="643866"/>
<dbReference type="GeneCards" id="CBLN3"/>
<dbReference type="HGNC" id="HGNC:20146">
    <property type="gene designation" value="CBLN3"/>
</dbReference>
<dbReference type="HPA" id="ENSG00000139899">
    <property type="expression patterns" value="Tissue enriched (brain)"/>
</dbReference>
<dbReference type="MIM" id="612978">
    <property type="type" value="gene"/>
</dbReference>
<dbReference type="neXtProt" id="NX_Q6UW01"/>
<dbReference type="OpenTargets" id="ENSG00000139899"/>
<dbReference type="PharmGKB" id="PA134885212"/>
<dbReference type="VEuPathDB" id="HostDB:ENSG00000139899"/>
<dbReference type="eggNOG" id="ENOG502QVN9">
    <property type="taxonomic scope" value="Eukaryota"/>
</dbReference>
<dbReference type="GeneTree" id="ENSGT00940000162110"/>
<dbReference type="HOGENOM" id="CLU_001074_8_2_1"/>
<dbReference type="InParanoid" id="Q6UW01"/>
<dbReference type="OMA" id="AKRHWPP"/>
<dbReference type="OrthoDB" id="6154955at2759"/>
<dbReference type="PAN-GO" id="Q6UW01">
    <property type="GO annotations" value="3 GO annotations based on evolutionary models"/>
</dbReference>
<dbReference type="PhylomeDB" id="Q6UW01"/>
<dbReference type="TreeFam" id="TF329591"/>
<dbReference type="PathwayCommons" id="Q6UW01"/>
<dbReference type="SignaLink" id="Q6UW01"/>
<dbReference type="BioGRID-ORCS" id="643866">
    <property type="hits" value="11 hits in 1155 CRISPR screens"/>
</dbReference>
<dbReference type="GenomeRNAi" id="643866"/>
<dbReference type="Pharos" id="Q6UW01">
    <property type="development level" value="Tdark"/>
</dbReference>
<dbReference type="PRO" id="PR:Q6UW01"/>
<dbReference type="Proteomes" id="UP000005640">
    <property type="component" value="Chromosome 14"/>
</dbReference>
<dbReference type="RNAct" id="Q6UW01">
    <property type="molecule type" value="protein"/>
</dbReference>
<dbReference type="Bgee" id="ENSG00000139899">
    <property type="expression patterns" value="Expressed in cerebellar vermis and 106 other cell types or tissues"/>
</dbReference>
<dbReference type="ExpressionAtlas" id="Q6UW01">
    <property type="expression patterns" value="baseline and differential"/>
</dbReference>
<dbReference type="GO" id="GO:0005783">
    <property type="term" value="C:endoplasmic reticulum"/>
    <property type="evidence" value="ECO:0007669"/>
    <property type="project" value="UniProtKB-SubCell"/>
</dbReference>
<dbReference type="GO" id="GO:0005615">
    <property type="term" value="C:extracellular space"/>
    <property type="evidence" value="ECO:0007669"/>
    <property type="project" value="Ensembl"/>
</dbReference>
<dbReference type="GO" id="GO:0005794">
    <property type="term" value="C:Golgi apparatus"/>
    <property type="evidence" value="ECO:0007669"/>
    <property type="project" value="UniProtKB-SubCell"/>
</dbReference>
<dbReference type="GO" id="GO:0098688">
    <property type="term" value="C:parallel fiber to Purkinje cell synapse"/>
    <property type="evidence" value="ECO:0007669"/>
    <property type="project" value="Ensembl"/>
</dbReference>
<dbReference type="GO" id="GO:0045202">
    <property type="term" value="C:synapse"/>
    <property type="evidence" value="ECO:0000318"/>
    <property type="project" value="GO_Central"/>
</dbReference>
<dbReference type="GO" id="GO:0043083">
    <property type="term" value="C:synaptic cleft"/>
    <property type="evidence" value="ECO:0007669"/>
    <property type="project" value="Ensembl"/>
</dbReference>
<dbReference type="GO" id="GO:0099558">
    <property type="term" value="P:maintenance of synapse structure"/>
    <property type="evidence" value="ECO:0000318"/>
    <property type="project" value="GO_Central"/>
</dbReference>
<dbReference type="FunFam" id="2.60.120.40:FF:000002">
    <property type="entry name" value="Cerebellin 4"/>
    <property type="match status" value="1"/>
</dbReference>
<dbReference type="Gene3D" id="2.60.120.40">
    <property type="match status" value="1"/>
</dbReference>
<dbReference type="InterPro" id="IPR001073">
    <property type="entry name" value="C1q_dom"/>
</dbReference>
<dbReference type="InterPro" id="IPR050822">
    <property type="entry name" value="Cerebellin_Synaptic_Org"/>
</dbReference>
<dbReference type="InterPro" id="IPR008983">
    <property type="entry name" value="Tumour_necrosis_fac-like_dom"/>
</dbReference>
<dbReference type="PANTHER" id="PTHR22923:SF2">
    <property type="entry name" value="CEREBELLIN-3"/>
    <property type="match status" value="1"/>
</dbReference>
<dbReference type="PANTHER" id="PTHR22923">
    <property type="entry name" value="CEREBELLIN-RELATED"/>
    <property type="match status" value="1"/>
</dbReference>
<dbReference type="Pfam" id="PF00386">
    <property type="entry name" value="C1q"/>
    <property type="match status" value="1"/>
</dbReference>
<dbReference type="PRINTS" id="PR00007">
    <property type="entry name" value="COMPLEMNTC1Q"/>
</dbReference>
<dbReference type="SMART" id="SM00110">
    <property type="entry name" value="C1Q"/>
    <property type="match status" value="1"/>
</dbReference>
<dbReference type="SUPFAM" id="SSF49842">
    <property type="entry name" value="TNF-like"/>
    <property type="match status" value="1"/>
</dbReference>
<dbReference type="PROSITE" id="PS50871">
    <property type="entry name" value="C1Q"/>
    <property type="match status" value="1"/>
</dbReference>